<dbReference type="EMBL" id="CP000498">
    <property type="protein sequence ID" value="ABN66513.2"/>
    <property type="molecule type" value="Genomic_DNA"/>
</dbReference>
<dbReference type="RefSeq" id="XP_001384542.2">
    <property type="nucleotide sequence ID" value="XM_001384505.1"/>
</dbReference>
<dbReference type="SMR" id="A3LU29"/>
<dbReference type="FunCoup" id="A3LU29">
    <property type="interactions" value="321"/>
</dbReference>
<dbReference type="STRING" id="322104.A3LU29"/>
<dbReference type="GeneID" id="4838769"/>
<dbReference type="KEGG" id="pic:PICST_77674"/>
<dbReference type="eggNOG" id="KOG4771">
    <property type="taxonomic scope" value="Eukaryota"/>
</dbReference>
<dbReference type="HOGENOM" id="CLU_078857_0_0_1"/>
<dbReference type="InParanoid" id="A3LU29"/>
<dbReference type="OMA" id="MQQTEAD"/>
<dbReference type="OrthoDB" id="285729at2759"/>
<dbReference type="Proteomes" id="UP000002258">
    <property type="component" value="Chromosome 4"/>
</dbReference>
<dbReference type="GO" id="GO:0005730">
    <property type="term" value="C:nucleolus"/>
    <property type="evidence" value="ECO:0007669"/>
    <property type="project" value="UniProtKB-SubCell"/>
</dbReference>
<dbReference type="GO" id="GO:0030687">
    <property type="term" value="C:preribosome, large subunit precursor"/>
    <property type="evidence" value="ECO:0007669"/>
    <property type="project" value="EnsemblFungi"/>
</dbReference>
<dbReference type="GO" id="GO:0042273">
    <property type="term" value="P:ribosomal large subunit biogenesis"/>
    <property type="evidence" value="ECO:0007669"/>
    <property type="project" value="EnsemblFungi"/>
</dbReference>
<dbReference type="GO" id="GO:0006364">
    <property type="term" value="P:rRNA processing"/>
    <property type="evidence" value="ECO:0007669"/>
    <property type="project" value="UniProtKB-KW"/>
</dbReference>
<dbReference type="InterPro" id="IPR019002">
    <property type="entry name" value="Ribosome_biogenesis_Nop16"/>
</dbReference>
<dbReference type="PANTHER" id="PTHR13243">
    <property type="entry name" value="HSPC111 PROTEIN-RELATED"/>
    <property type="match status" value="1"/>
</dbReference>
<dbReference type="PANTHER" id="PTHR13243:SF1">
    <property type="entry name" value="NUCLEOLAR PROTEIN 16"/>
    <property type="match status" value="1"/>
</dbReference>
<dbReference type="Pfam" id="PF09420">
    <property type="entry name" value="Nop16"/>
    <property type="match status" value="1"/>
</dbReference>
<comment type="function">
    <text evidence="1">Involved in the biogenesis of the 60S ribosomal subunit.</text>
</comment>
<comment type="subunit">
    <text evidence="1">Component of the pre-66S ribosomal particle.</text>
</comment>
<comment type="subcellular location">
    <subcellularLocation>
        <location evidence="1">Nucleus</location>
        <location evidence="1">Nucleolus</location>
    </subcellularLocation>
</comment>
<comment type="similarity">
    <text evidence="3">Belongs to the NOP16 family.</text>
</comment>
<proteinExistence type="inferred from homology"/>
<reference key="1">
    <citation type="journal article" date="2007" name="Nat. Biotechnol.">
        <title>Genome sequence of the lignocellulose-bioconverting and xylose-fermenting yeast Pichia stipitis.</title>
        <authorList>
            <person name="Jeffries T.W."/>
            <person name="Grigoriev I.V."/>
            <person name="Grimwood J."/>
            <person name="Laplaza J.M."/>
            <person name="Aerts A."/>
            <person name="Salamov A."/>
            <person name="Schmutz J."/>
            <person name="Lindquist E."/>
            <person name="Dehal P."/>
            <person name="Shapiro H."/>
            <person name="Jin Y.-S."/>
            <person name="Passoth V."/>
            <person name="Richardson P.M."/>
        </authorList>
    </citation>
    <scope>NUCLEOTIDE SEQUENCE [LARGE SCALE GENOMIC DNA]</scope>
    <source>
        <strain>ATCC 58785 / CBS 6054 / NBRC 10063 / NRRL Y-11545</strain>
    </source>
</reference>
<protein>
    <recommendedName>
        <fullName>Nucleolar protein 16</fullName>
    </recommendedName>
</protein>
<gene>
    <name type="primary">NOP16</name>
    <name type="ORF">PICST_77674</name>
</gene>
<name>NOP16_PICST</name>
<feature type="chain" id="PRO_0000320384" description="Nucleolar protein 16">
    <location>
        <begin position="1"/>
        <end position="213"/>
    </location>
</feature>
<feature type="region of interest" description="Disordered" evidence="2">
    <location>
        <begin position="1"/>
        <end position="25"/>
    </location>
</feature>
<feature type="compositionally biased region" description="Basic residues" evidence="2">
    <location>
        <begin position="1"/>
        <end position="23"/>
    </location>
</feature>
<accession>A3LU29</accession>
<evidence type="ECO:0000250" key="1"/>
<evidence type="ECO:0000256" key="2">
    <source>
        <dbReference type="SAM" id="MobiDB-lite"/>
    </source>
</evidence>
<evidence type="ECO:0000305" key="3"/>
<organism>
    <name type="scientific">Scheffersomyces stipitis (strain ATCC 58785 / CBS 6054 / NBRC 10063 / NRRL Y-11545)</name>
    <name type="common">Yeast</name>
    <name type="synonym">Pichia stipitis</name>
    <dbReference type="NCBI Taxonomy" id="322104"/>
    <lineage>
        <taxon>Eukaryota</taxon>
        <taxon>Fungi</taxon>
        <taxon>Dikarya</taxon>
        <taxon>Ascomycota</taxon>
        <taxon>Saccharomycotina</taxon>
        <taxon>Pichiomycetes</taxon>
        <taxon>Debaryomycetaceae</taxon>
        <taxon>Scheffersomyces</taxon>
    </lineage>
</organism>
<keyword id="KW-0539">Nucleus</keyword>
<keyword id="KW-1185">Reference proteome</keyword>
<keyword id="KW-0687">Ribonucleoprotein</keyword>
<keyword id="KW-0690">Ribosome biogenesis</keyword>
<keyword id="KW-0698">rRNA processing</keyword>
<sequence>MTSVRKRKMNRSSIKKATRRLKDRQRNINIHSNPIIAANWDKSLTLQQNYKRLGLRAKLGSMAGGQEQKVETLTEIRAKREKSASKVKPSDIEQTEDPAQIPEGEARLIRDEDTNEVVRVIYGTMKVSKDSEASEVENTSVIKQLEEYAQKNSQLKRERTASDRENEWLKSLYEKHGDDYDKMKWDKKLNVQQQSAGELRRRITKWKKVNSIE</sequence>